<organism>
    <name type="scientific">Heliothis zea nuclear polyhedrosis virus</name>
    <name type="common">HzSNPV</name>
    <name type="synonym">Helicoverpa zea single nucleocapsid nuclear polyhedrosis virus</name>
    <dbReference type="NCBI Taxonomy" id="28290"/>
    <lineage>
        <taxon>Viruses</taxon>
        <taxon>Viruses incertae sedis</taxon>
        <taxon>Naldaviricetes</taxon>
        <taxon>Lefavirales</taxon>
        <taxon>Baculoviridae</taxon>
        <taxon>Alphabaculovirus</taxon>
    </lineage>
</organism>
<name>PYHD_NPVHZ</name>
<gene>
    <name type="primary">PH</name>
    <name type="synonym">P29</name>
    <name type="synonym">POLH</name>
</gene>
<comment type="function">
    <text>Major component of the virus occlusion bodies, which are large proteinaceous structures (polyhedra), that protect the virus from the outside environment for extended periods until they are ingested by insect larvae.</text>
</comment>
<comment type="similarity">
    <text evidence="1">Belongs to the polyhedrin family.</text>
</comment>
<organismHost>
    <name type="scientific">Lepidoptera</name>
    <name type="common">butterflies and moths</name>
    <dbReference type="NCBI Taxonomy" id="7088"/>
</organismHost>
<proteinExistence type="inferred from homology"/>
<reference key="1">
    <citation type="journal article" date="1994" name="J. Gen. Virol.">
        <title>Nucleotide sequence of the polyhedrin gene region of Helicoverpa zea single nucleocapsid nuclear polyhedrosis virus: placement of the virus in lepidopteran nuclear polyhedrosis virus group II.</title>
        <authorList>
            <person name="Cowan P.J."/>
            <person name="Bulach D.M."/>
            <person name="Goodge K."/>
            <person name="Robertson A."/>
            <person name="Tribe D.E."/>
        </authorList>
    </citation>
    <scope>NUCLEOTIDE SEQUENCE [GENOMIC DNA]</scope>
    <source>
        <strain>Elkar</strain>
    </source>
</reference>
<sequence length="246" mass="28898">MYTRYSYSPTLGKTYVYDNKYFKNLGAVIKNAKRKKHLEEHEHEERNLDSLDKYLVAEDPFLGPGKNQKLTLFKEIRSVKPDTMKLVVNWSGREFLRETWTRFMEDSFPIVNDQEIMDVFLSVNMRPTKPNRCYRFLAQHALRCDPDYIPHEVIRIVEPSYVGSNNEYRISLAKKYGGCPVMNLHAEYTNSFEDFITNVIWENFYKPIVYVGTDSAEEEEILLEVSLIFKIKEFAPDAPLYTGPAY</sequence>
<evidence type="ECO:0000305" key="1"/>
<feature type="chain" id="PRO_0000217250" description="Polyhedrin">
    <location>
        <begin position="1"/>
        <end position="246"/>
    </location>
</feature>
<protein>
    <recommendedName>
        <fullName>Polyhedrin</fullName>
    </recommendedName>
    <alternativeName>
        <fullName>Major occlusion protein</fullName>
    </alternativeName>
</protein>
<accession>P30786</accession>
<keyword id="KW-0842">Viral occlusion body</keyword>
<dbReference type="EMBL" id="U67264">
    <property type="protein sequence ID" value="AAB54089.1"/>
    <property type="molecule type" value="Genomic_DNA"/>
</dbReference>
<dbReference type="SMR" id="P30786"/>
<dbReference type="GO" id="GO:0039679">
    <property type="term" value="C:viral occlusion body"/>
    <property type="evidence" value="ECO:0007669"/>
    <property type="project" value="UniProtKB-KW"/>
</dbReference>
<dbReference type="GO" id="GO:0005198">
    <property type="term" value="F:structural molecule activity"/>
    <property type="evidence" value="ECO:0007669"/>
    <property type="project" value="InterPro"/>
</dbReference>
<dbReference type="InterPro" id="IPR001746">
    <property type="entry name" value="Polyhedrin"/>
</dbReference>
<dbReference type="Pfam" id="PF00738">
    <property type="entry name" value="Polyhedrin"/>
    <property type="match status" value="1"/>
</dbReference>